<reference key="1">
    <citation type="journal article" date="1994" name="Mol. Gen. Genet.">
        <title>Cloning and characterisation of the cytochrome c gene of Aspergillus nidulans.</title>
        <authorList>
            <person name="Raitt D.C."/>
            <person name="Bradshaw R.E."/>
            <person name="Pillar T.M."/>
        </authorList>
    </citation>
    <scope>NUCLEOTIDE SEQUENCE [GENOMIC DNA]</scope>
    <source>
        <strain>R153</strain>
    </source>
</reference>
<reference key="2">
    <citation type="submission" date="1997-03" db="EMBL/GenBank/DDBJ databases">
        <authorList>
            <person name="Bradshaw R.E."/>
        </authorList>
    </citation>
    <scope>SEQUENCE REVISION TO N-TERMINUS</scope>
</reference>
<reference key="3">
    <citation type="journal article" date="2005" name="Nature">
        <title>Sequencing of Aspergillus nidulans and comparative analysis with A. fumigatus and A. oryzae.</title>
        <authorList>
            <person name="Galagan J.E."/>
            <person name="Calvo S.E."/>
            <person name="Cuomo C."/>
            <person name="Ma L.-J."/>
            <person name="Wortman J.R."/>
            <person name="Batzoglou S."/>
            <person name="Lee S.-I."/>
            <person name="Bastuerkmen M."/>
            <person name="Spevak C.C."/>
            <person name="Clutterbuck J."/>
            <person name="Kapitonov V."/>
            <person name="Jurka J."/>
            <person name="Scazzocchio C."/>
            <person name="Farman M.L."/>
            <person name="Butler J."/>
            <person name="Purcell S."/>
            <person name="Harris S."/>
            <person name="Braus G.H."/>
            <person name="Draht O."/>
            <person name="Busch S."/>
            <person name="D'Enfert C."/>
            <person name="Bouchier C."/>
            <person name="Goldman G.H."/>
            <person name="Bell-Pedersen D."/>
            <person name="Griffiths-Jones S."/>
            <person name="Doonan J.H."/>
            <person name="Yu J."/>
            <person name="Vienken K."/>
            <person name="Pain A."/>
            <person name="Freitag M."/>
            <person name="Selker E.U."/>
            <person name="Archer D.B."/>
            <person name="Penalva M.A."/>
            <person name="Oakley B.R."/>
            <person name="Momany M."/>
            <person name="Tanaka T."/>
            <person name="Kumagai T."/>
            <person name="Asai K."/>
            <person name="Machida M."/>
            <person name="Nierman W.C."/>
            <person name="Denning D.W."/>
            <person name="Caddick M.X."/>
            <person name="Hynes M."/>
            <person name="Paoletti M."/>
            <person name="Fischer R."/>
            <person name="Miller B.L."/>
            <person name="Dyer P.S."/>
            <person name="Sachs M.S."/>
            <person name="Osmani S.A."/>
            <person name="Birren B.W."/>
        </authorList>
    </citation>
    <scope>NUCLEOTIDE SEQUENCE [LARGE SCALE GENOMIC DNA]</scope>
    <source>
        <strain>FGSC A4 / ATCC 38163 / CBS 112.46 / NRRL 194 / M139</strain>
    </source>
</reference>
<reference key="4">
    <citation type="journal article" date="2009" name="Fungal Genet. Biol.">
        <title>The 2008 update of the Aspergillus nidulans genome annotation: a community effort.</title>
        <authorList>
            <person name="Wortman J.R."/>
            <person name="Gilsenan J.M."/>
            <person name="Joardar V."/>
            <person name="Deegan J."/>
            <person name="Clutterbuck J."/>
            <person name="Andersen M.R."/>
            <person name="Archer D."/>
            <person name="Bencina M."/>
            <person name="Braus G."/>
            <person name="Coutinho P."/>
            <person name="von Dohren H."/>
            <person name="Doonan J."/>
            <person name="Driessen A.J."/>
            <person name="Durek P."/>
            <person name="Espeso E."/>
            <person name="Fekete E."/>
            <person name="Flipphi M."/>
            <person name="Estrada C.G."/>
            <person name="Geysens S."/>
            <person name="Goldman G."/>
            <person name="de Groot P.W."/>
            <person name="Hansen K."/>
            <person name="Harris S.D."/>
            <person name="Heinekamp T."/>
            <person name="Helmstaedt K."/>
            <person name="Henrissat B."/>
            <person name="Hofmann G."/>
            <person name="Homan T."/>
            <person name="Horio T."/>
            <person name="Horiuchi H."/>
            <person name="James S."/>
            <person name="Jones M."/>
            <person name="Karaffa L."/>
            <person name="Karanyi Z."/>
            <person name="Kato M."/>
            <person name="Keller N."/>
            <person name="Kelly D.E."/>
            <person name="Kiel J.A."/>
            <person name="Kim J.M."/>
            <person name="van der Klei I.J."/>
            <person name="Klis F.M."/>
            <person name="Kovalchuk A."/>
            <person name="Krasevec N."/>
            <person name="Kubicek C.P."/>
            <person name="Liu B."/>
            <person name="Maccabe A."/>
            <person name="Meyer V."/>
            <person name="Mirabito P."/>
            <person name="Miskei M."/>
            <person name="Mos M."/>
            <person name="Mullins J."/>
            <person name="Nelson D.R."/>
            <person name="Nielsen J."/>
            <person name="Oakley B.R."/>
            <person name="Osmani S.A."/>
            <person name="Pakula T."/>
            <person name="Paszewski A."/>
            <person name="Paulsen I."/>
            <person name="Pilsyk S."/>
            <person name="Pocsi I."/>
            <person name="Punt P.J."/>
            <person name="Ram A.F."/>
            <person name="Ren Q."/>
            <person name="Robellet X."/>
            <person name="Robson G."/>
            <person name="Seiboth B."/>
            <person name="van Solingen P."/>
            <person name="Specht T."/>
            <person name="Sun J."/>
            <person name="Taheri-Talesh N."/>
            <person name="Takeshita N."/>
            <person name="Ussery D."/>
            <person name="vanKuyk P.A."/>
            <person name="Visser H."/>
            <person name="van de Vondervoort P.J."/>
            <person name="de Vries R.P."/>
            <person name="Walton J."/>
            <person name="Xiang X."/>
            <person name="Xiong Y."/>
            <person name="Zeng A.P."/>
            <person name="Brandt B.W."/>
            <person name="Cornell M.J."/>
            <person name="van den Hondel C.A."/>
            <person name="Visser J."/>
            <person name="Oliver S.G."/>
            <person name="Turner G."/>
        </authorList>
    </citation>
    <scope>GENOME REANNOTATION</scope>
    <source>
        <strain>FGSC A4 / ATCC 38163 / CBS 112.46 / NRRL 194 / M139</strain>
    </source>
</reference>
<organism>
    <name type="scientific">Emericella nidulans (strain FGSC A4 / ATCC 38163 / CBS 112.46 / NRRL 194 / M139)</name>
    <name type="common">Aspergillus nidulans</name>
    <dbReference type="NCBI Taxonomy" id="227321"/>
    <lineage>
        <taxon>Eukaryota</taxon>
        <taxon>Fungi</taxon>
        <taxon>Dikarya</taxon>
        <taxon>Ascomycota</taxon>
        <taxon>Pezizomycotina</taxon>
        <taxon>Eurotiomycetes</taxon>
        <taxon>Eurotiomycetidae</taxon>
        <taxon>Eurotiales</taxon>
        <taxon>Aspergillaceae</taxon>
        <taxon>Aspergillus</taxon>
        <taxon>Aspergillus subgen. Nidulantes</taxon>
    </lineage>
</organism>
<protein>
    <recommendedName>
        <fullName>Cytochrome c</fullName>
    </recommendedName>
</protein>
<sequence length="113" mass="12379">MAKGGDSYSPGDSTKGAKLFETRCKQCHTVENGGGHKVGPNLHGLFGRKTGQAEGYAYTDANKQADVTWDENSLFKYLENPKKFIPGTKMAFGGLKKTKERNDLITYLKESTA</sequence>
<feature type="chain" id="PRO_0000108323" description="Cytochrome c">
    <location>
        <begin position="1"/>
        <end position="113"/>
    </location>
</feature>
<feature type="binding site" description="covalent" evidence="2">
    <location>
        <position position="24"/>
    </location>
    <ligand>
        <name>heme c</name>
        <dbReference type="ChEBI" id="CHEBI:61717"/>
    </ligand>
</feature>
<feature type="binding site" description="covalent" evidence="2">
    <location>
        <position position="27"/>
    </location>
    <ligand>
        <name>heme c</name>
        <dbReference type="ChEBI" id="CHEBI:61717"/>
    </ligand>
</feature>
<feature type="binding site" description="axial binding residue" evidence="2">
    <location>
        <position position="28"/>
    </location>
    <ligand>
        <name>heme c</name>
        <dbReference type="ChEBI" id="CHEBI:61717"/>
    </ligand>
    <ligandPart>
        <name>Fe</name>
        <dbReference type="ChEBI" id="CHEBI:18248"/>
    </ligandPart>
</feature>
<feature type="binding site" description="axial binding residue" evidence="2">
    <location>
        <position position="90"/>
    </location>
    <ligand>
        <name>heme c</name>
        <dbReference type="ChEBI" id="CHEBI:61717"/>
    </ligand>
    <ligandPart>
        <name>Fe</name>
        <dbReference type="ChEBI" id="CHEBI:18248"/>
    </ligandPart>
</feature>
<feature type="modified residue" description="N6,N6,N6-trimethyllysine" evidence="1">
    <location>
        <position position="82"/>
    </location>
</feature>
<feature type="sequence conflict" description="In Ref. 1; AAB50255." evidence="3" ref="1">
    <original>E</original>
    <variation>G</variation>
    <location>
        <position position="54"/>
    </location>
</feature>
<feature type="sequence conflict" description="In Ref. 1; AAB50255." evidence="3" ref="1">
    <original>F</original>
    <variation>Y</variation>
    <location>
        <position position="84"/>
    </location>
</feature>
<keyword id="KW-0249">Electron transport</keyword>
<keyword id="KW-0349">Heme</keyword>
<keyword id="KW-0408">Iron</keyword>
<keyword id="KW-0479">Metal-binding</keyword>
<keyword id="KW-0488">Methylation</keyword>
<keyword id="KW-0496">Mitochondrion</keyword>
<keyword id="KW-1185">Reference proteome</keyword>
<keyword id="KW-0679">Respiratory chain</keyword>
<keyword id="KW-0346">Stress response</keyword>
<keyword id="KW-0813">Transport</keyword>
<evidence type="ECO:0000250" key="1"/>
<evidence type="ECO:0000255" key="2">
    <source>
        <dbReference type="PROSITE-ProRule" id="PRU00433"/>
    </source>
</evidence>
<evidence type="ECO:0000305" key="3"/>
<accession>P38091</accession>
<accession>C8V1J9</accession>
<accession>P87201</accession>
<accession>Q5AZN4</accession>
<proteinExistence type="evidence at transcript level"/>
<name>CYC_EMENI</name>
<dbReference type="EMBL" id="M83141">
    <property type="protein sequence ID" value="AAB50255.1"/>
    <property type="molecule type" value="Genomic_DNA"/>
</dbReference>
<dbReference type="EMBL" id="AACD01000107">
    <property type="protein sequence ID" value="EAA58630.1"/>
    <property type="status" value="ALT_SEQ"/>
    <property type="molecule type" value="Genomic_DNA"/>
</dbReference>
<dbReference type="EMBL" id="BN001301">
    <property type="protein sequence ID" value="CBF69865.1"/>
    <property type="status" value="ALT_SEQ"/>
    <property type="molecule type" value="Genomic_DNA"/>
</dbReference>
<dbReference type="PIR" id="S41568">
    <property type="entry name" value="S41568"/>
</dbReference>
<dbReference type="RefSeq" id="XP_663850.1">
    <property type="nucleotide sequence ID" value="XM_658758.1"/>
</dbReference>
<dbReference type="SMR" id="P38091"/>
<dbReference type="FunCoup" id="P38091">
    <property type="interactions" value="550"/>
</dbReference>
<dbReference type="STRING" id="227321.P38091"/>
<dbReference type="HOGENOM" id="CLU_060944_3_1_1"/>
<dbReference type="InParanoid" id="P38091"/>
<dbReference type="Proteomes" id="UP000000560">
    <property type="component" value="Chromosome I"/>
</dbReference>
<dbReference type="GO" id="GO:0005758">
    <property type="term" value="C:mitochondrial intermembrane space"/>
    <property type="evidence" value="ECO:0000318"/>
    <property type="project" value="GO_Central"/>
</dbReference>
<dbReference type="GO" id="GO:0009055">
    <property type="term" value="F:electron transfer activity"/>
    <property type="evidence" value="ECO:0000318"/>
    <property type="project" value="GO_Central"/>
</dbReference>
<dbReference type="GO" id="GO:0020037">
    <property type="term" value="F:heme binding"/>
    <property type="evidence" value="ECO:0007669"/>
    <property type="project" value="InterPro"/>
</dbReference>
<dbReference type="GO" id="GO:0046872">
    <property type="term" value="F:metal ion binding"/>
    <property type="evidence" value="ECO:0007669"/>
    <property type="project" value="UniProtKB-KW"/>
</dbReference>
<dbReference type="GO" id="GO:0006123">
    <property type="term" value="P:mitochondrial electron transport, cytochrome c to oxygen"/>
    <property type="evidence" value="ECO:0000318"/>
    <property type="project" value="GO_Central"/>
</dbReference>
<dbReference type="GO" id="GO:0006122">
    <property type="term" value="P:mitochondrial electron transport, ubiquinol to cytochrome c"/>
    <property type="evidence" value="ECO:0000318"/>
    <property type="project" value="GO_Central"/>
</dbReference>
<dbReference type="FunFam" id="1.10.760.10:FF:000001">
    <property type="entry name" value="Cytochrome c iso-1"/>
    <property type="match status" value="1"/>
</dbReference>
<dbReference type="Gene3D" id="1.10.760.10">
    <property type="entry name" value="Cytochrome c-like domain"/>
    <property type="match status" value="1"/>
</dbReference>
<dbReference type="InterPro" id="IPR009056">
    <property type="entry name" value="Cyt_c-like_dom"/>
</dbReference>
<dbReference type="InterPro" id="IPR036909">
    <property type="entry name" value="Cyt_c-like_dom_sf"/>
</dbReference>
<dbReference type="InterPro" id="IPR002327">
    <property type="entry name" value="Cyt_c_1A/1B"/>
</dbReference>
<dbReference type="PANTHER" id="PTHR11961">
    <property type="entry name" value="CYTOCHROME C"/>
    <property type="match status" value="1"/>
</dbReference>
<dbReference type="Pfam" id="PF00034">
    <property type="entry name" value="Cytochrom_C"/>
    <property type="match status" value="1"/>
</dbReference>
<dbReference type="PRINTS" id="PR00604">
    <property type="entry name" value="CYTCHRMECIAB"/>
</dbReference>
<dbReference type="SUPFAM" id="SSF46626">
    <property type="entry name" value="Cytochrome c"/>
    <property type="match status" value="1"/>
</dbReference>
<dbReference type="PROSITE" id="PS51007">
    <property type="entry name" value="CYTC"/>
    <property type="match status" value="1"/>
</dbReference>
<gene>
    <name type="primary">cycA</name>
    <name type="synonym">cytC</name>
    <name type="ORF">AN6246</name>
</gene>
<comment type="function">
    <text>Electron carrier protein. The oxidized form of the cytochrome c heme group can accept an electron from the heme group of the cytochrome c1 subunit of cytochrome reductase. Cytochrome c then transfers this electron to the cytochrome oxidase complex, the final protein carrier in the mitochondrial electron-transport chain.</text>
</comment>
<comment type="subcellular location">
    <subcellularLocation>
        <location>Mitochondrion intermembrane space</location>
    </subcellularLocation>
    <text>Loosely associated with the inner membrane.</text>
</comment>
<comment type="induction">
    <text>By oxygen and heat shock.</text>
</comment>
<comment type="PTM">
    <text>Binds 1 heme c group covalently per subunit.</text>
</comment>
<comment type="similarity">
    <text evidence="3">Belongs to the cytochrome c family.</text>
</comment>
<comment type="sequence caution" evidence="3">
    <conflict type="erroneous translation">
        <sequence resource="EMBL-CDS" id="CBF69865"/>
    </conflict>
    <text>Wrong choice of frame.</text>
</comment>
<comment type="sequence caution" evidence="3">
    <conflict type="erroneous gene model prediction">
        <sequence resource="EMBL-CDS" id="EAA58630"/>
    </conflict>
</comment>
<comment type="online information" name="Protein Spotlight">
    <link uri="https://www.proteinspotlight.org/back_issues/076"/>
    <text>Life shuttle - Issue 76 of November 2006</text>
</comment>